<gene>
    <name type="primary">atpB</name>
</gene>
<comment type="function">
    <text evidence="1">Produces ATP from ADP in the presence of a proton gradient across the membrane. The catalytic sites are hosted primarily by the beta subunits (By similarity).</text>
</comment>
<comment type="catalytic activity">
    <reaction evidence="2">
        <text>ATP + H2O + 4 H(+)(in) = ADP + phosphate + 5 H(+)(out)</text>
        <dbReference type="Rhea" id="RHEA:57720"/>
        <dbReference type="ChEBI" id="CHEBI:15377"/>
        <dbReference type="ChEBI" id="CHEBI:15378"/>
        <dbReference type="ChEBI" id="CHEBI:30616"/>
        <dbReference type="ChEBI" id="CHEBI:43474"/>
        <dbReference type="ChEBI" id="CHEBI:456216"/>
        <dbReference type="EC" id="7.1.2.2"/>
    </reaction>
</comment>
<comment type="subunit">
    <text evidence="1">F-type ATPases have 2 components, CF(1) - the catalytic core - and CF(0) - the membrane proton channel. CF(1) has five subunits: alpha(3), beta(3), gamma(1), delta(1), epsilon(1). CF(0) has four main subunits: a(1), b(1), b'(1) and c(9-12) (By similarity).</text>
</comment>
<comment type="subcellular location">
    <subcellularLocation>
        <location evidence="1">Plastid</location>
        <location evidence="1">Chloroplast thylakoid membrane</location>
        <topology evidence="1">Peripheral membrane protein</topology>
    </subcellularLocation>
</comment>
<comment type="similarity">
    <text evidence="3">Belongs to the ATPase alpha/beta chains family.</text>
</comment>
<dbReference type="EC" id="7.1.2.2"/>
<dbReference type="EMBL" id="U93839">
    <property type="protein sequence ID" value="AAB51747.1"/>
    <property type="molecule type" value="Genomic_DNA"/>
</dbReference>
<dbReference type="GO" id="GO:0009535">
    <property type="term" value="C:chloroplast thylakoid membrane"/>
    <property type="evidence" value="ECO:0007669"/>
    <property type="project" value="UniProtKB-SubCell"/>
</dbReference>
<dbReference type="GO" id="GO:0005739">
    <property type="term" value="C:mitochondrion"/>
    <property type="evidence" value="ECO:0007669"/>
    <property type="project" value="GOC"/>
</dbReference>
<dbReference type="GO" id="GO:0045259">
    <property type="term" value="C:proton-transporting ATP synthase complex"/>
    <property type="evidence" value="ECO:0007669"/>
    <property type="project" value="UniProtKB-KW"/>
</dbReference>
<dbReference type="GO" id="GO:0005524">
    <property type="term" value="F:ATP binding"/>
    <property type="evidence" value="ECO:0007669"/>
    <property type="project" value="UniProtKB-KW"/>
</dbReference>
<dbReference type="GO" id="GO:0046933">
    <property type="term" value="F:proton-transporting ATP synthase activity, rotational mechanism"/>
    <property type="evidence" value="ECO:0007669"/>
    <property type="project" value="InterPro"/>
</dbReference>
<dbReference type="GO" id="GO:0042776">
    <property type="term" value="P:proton motive force-driven mitochondrial ATP synthesis"/>
    <property type="evidence" value="ECO:0007669"/>
    <property type="project" value="TreeGrafter"/>
</dbReference>
<dbReference type="CDD" id="cd18110">
    <property type="entry name" value="ATP-synt_F1_beta_C"/>
    <property type="match status" value="1"/>
</dbReference>
<dbReference type="FunFam" id="1.10.1140.10:FF:000001">
    <property type="entry name" value="ATP synthase subunit beta"/>
    <property type="match status" value="1"/>
</dbReference>
<dbReference type="Gene3D" id="1.10.1140.10">
    <property type="entry name" value="Bovine Mitochondrial F1-atpase, Atp Synthase Beta Chain, Chain D, domain 3"/>
    <property type="match status" value="1"/>
</dbReference>
<dbReference type="Gene3D" id="3.40.50.300">
    <property type="entry name" value="P-loop containing nucleotide triphosphate hydrolases"/>
    <property type="match status" value="1"/>
</dbReference>
<dbReference type="InterPro" id="IPR055190">
    <property type="entry name" value="ATP-synt_VA_C"/>
</dbReference>
<dbReference type="InterPro" id="IPR005722">
    <property type="entry name" value="ATP_synth_F1_bsu"/>
</dbReference>
<dbReference type="InterPro" id="IPR020003">
    <property type="entry name" value="ATPase_a/bsu_AS"/>
</dbReference>
<dbReference type="InterPro" id="IPR050053">
    <property type="entry name" value="ATPase_alpha/beta_chains"/>
</dbReference>
<dbReference type="InterPro" id="IPR000194">
    <property type="entry name" value="ATPase_F1/V1/A1_a/bsu_nucl-bd"/>
</dbReference>
<dbReference type="InterPro" id="IPR024034">
    <property type="entry name" value="ATPase_F1/V1_b/a_C"/>
</dbReference>
<dbReference type="InterPro" id="IPR027417">
    <property type="entry name" value="P-loop_NTPase"/>
</dbReference>
<dbReference type="NCBIfam" id="TIGR01039">
    <property type="entry name" value="atpD"/>
    <property type="match status" value="1"/>
</dbReference>
<dbReference type="PANTHER" id="PTHR15184">
    <property type="entry name" value="ATP SYNTHASE"/>
    <property type="match status" value="1"/>
</dbReference>
<dbReference type="PANTHER" id="PTHR15184:SF71">
    <property type="entry name" value="ATP SYNTHASE SUBUNIT BETA, MITOCHONDRIAL"/>
    <property type="match status" value="1"/>
</dbReference>
<dbReference type="Pfam" id="PF00006">
    <property type="entry name" value="ATP-synt_ab"/>
    <property type="match status" value="1"/>
</dbReference>
<dbReference type="Pfam" id="PF22919">
    <property type="entry name" value="ATP-synt_VA_C"/>
    <property type="match status" value="1"/>
</dbReference>
<dbReference type="SUPFAM" id="SSF47917">
    <property type="entry name" value="C-terminal domain of alpha and beta subunits of F1 ATP synthase"/>
    <property type="match status" value="1"/>
</dbReference>
<dbReference type="SUPFAM" id="SSF52540">
    <property type="entry name" value="P-loop containing nucleoside triphosphate hydrolases"/>
    <property type="match status" value="1"/>
</dbReference>
<dbReference type="PROSITE" id="PS00152">
    <property type="entry name" value="ATPASE_ALPHA_BETA"/>
    <property type="match status" value="1"/>
</dbReference>
<geneLocation type="chloroplast"/>
<reference key="1">
    <citation type="journal article" date="1997" name="Am. J. Bot.">
        <title>Evaluation of atpB nucleotide sequences for phylogenetic studies of ferns and other pteridophytes.</title>
        <authorList>
            <person name="Wolf P.G."/>
        </authorList>
    </citation>
    <scope>NUCLEOTIDE SEQUENCE [GENOMIC DNA]</scope>
</reference>
<proteinExistence type="inferred from homology"/>
<feature type="chain" id="PRO_0000144497" description="ATP synthase subunit beta, chloroplastic">
    <location>
        <begin position="1" status="less than"/>
        <end position="284" status="greater than"/>
    </location>
</feature>
<feature type="non-terminal residue">
    <location>
        <position position="1"/>
    </location>
</feature>
<feature type="non-terminal residue">
    <location>
        <position position="284"/>
    </location>
</feature>
<name>ATPB_ASPND</name>
<keyword id="KW-0066">ATP synthesis</keyword>
<keyword id="KW-0067">ATP-binding</keyword>
<keyword id="KW-0139">CF(1)</keyword>
<keyword id="KW-0150">Chloroplast</keyword>
<keyword id="KW-0375">Hydrogen ion transport</keyword>
<keyword id="KW-0406">Ion transport</keyword>
<keyword id="KW-0472">Membrane</keyword>
<keyword id="KW-0547">Nucleotide-binding</keyword>
<keyword id="KW-0934">Plastid</keyword>
<keyword id="KW-0793">Thylakoid</keyword>
<keyword id="KW-1278">Translocase</keyword>
<keyword id="KW-0813">Transport</keyword>
<sequence length="284" mass="31031">IGKAHGGVSVSGGVGERTREGNXLYMEMKESKVINEQNISESKVALVYGQMNEPPGARMRVGLTALTMAEYFRDVNKQDVLLFIDNIFRFVQAGSEVSALLGRMPSAVGYQPTLGTEMGSLQERITSTKEGSITSIQAVYVPADDLTDPAPATTSAHLDATTVLSRGLAAKGIYPAVDPLDSTSTMLQPWIVGEEHYDTAQGVKQTLQRYKELQDIIAILGLDELSEEDRLTVARARKIERFLSQPFFVAEVFTGSPGKYVRLSETIKGFQMILSGELDXLPEQ</sequence>
<evidence type="ECO:0000250" key="1"/>
<evidence type="ECO:0000255" key="2">
    <source>
        <dbReference type="PROSITE-ProRule" id="PRU10106"/>
    </source>
</evidence>
<evidence type="ECO:0000305" key="3"/>
<protein>
    <recommendedName>
        <fullName>ATP synthase subunit beta, chloroplastic</fullName>
        <ecNumber>7.1.2.2</ecNumber>
    </recommendedName>
    <alternativeName>
        <fullName>ATP synthase F1 sector subunit beta</fullName>
    </alternativeName>
    <alternativeName>
        <fullName>F-ATPase subunit beta</fullName>
    </alternativeName>
</protein>
<organism>
    <name type="scientific">Asplenium nidus</name>
    <name type="common">Bird's nest fern</name>
    <dbReference type="NCBI Taxonomy" id="29642"/>
    <lineage>
        <taxon>Eukaryota</taxon>
        <taxon>Viridiplantae</taxon>
        <taxon>Streptophyta</taxon>
        <taxon>Embryophyta</taxon>
        <taxon>Tracheophyta</taxon>
        <taxon>Polypodiopsida</taxon>
        <taxon>Polypodiidae</taxon>
        <taxon>Polypodiales</taxon>
        <taxon>Aspleniineae</taxon>
        <taxon>Aspleniaceae</taxon>
        <taxon>Asplenium</taxon>
    </lineage>
</organism>
<accession>O03063</accession>